<sequence length="405" mass="44373">MLPLLLCIVPYCWSSRLDPRASSFDYNGEKVRGVNLGGWLVLEPWITPSIFDAAGAEAVDEWSLTKILGKEEAEARLSAHWKSFVSAGDFQRMADAGLNHVRIPIGYWALGPLEGDPYVDGQLEYLDKAVEWAGAAGLKVLIDLHGAPGSQNGFDNSGRRGAIQWQQGDTVEQTLDAFDLLAERYLGSDTVAAIEAINEPNIPGGVDQGKLQEYYGSVYGIVNKYNAGTSVVYGDGFLPVESWNGFKTEGSKVVMDTHHYHMFDNGLIAMDIDSHIDAVCQFAHQHLEASDKPVIVGEWTGAVTDCAKYLNGKGNGARYDGSYAADKAIGDCSSLATGFVSKLSDEERSDMRRFIEAQLDAFELKSGWVFWTWKTEGAPGWDMSDLLEAGVFPTSPDDREFPKQC</sequence>
<proteinExistence type="inferred from homology"/>
<name>EXGA_ASPFN</name>
<reference key="1">
    <citation type="journal article" date="2015" name="Genome Announc.">
        <title>Genome sequence of Aspergillus flavus NRRL 3357, a strain that causes aflatoxin contamination of food and feed.</title>
        <authorList>
            <person name="Nierman W.C."/>
            <person name="Yu J."/>
            <person name="Fedorova-Abrams N.D."/>
            <person name="Losada L."/>
            <person name="Cleveland T.E."/>
            <person name="Bhatnagar D."/>
            <person name="Bennett J.W."/>
            <person name="Dean R."/>
            <person name="Payne G.A."/>
        </authorList>
    </citation>
    <scope>NUCLEOTIDE SEQUENCE [LARGE SCALE GENOMIC DNA]</scope>
    <source>
        <strain>ATCC 200026 / FGSC A1120 / IAM 13836 / NRRL 3357 / JCM 12722 / SRRC 167</strain>
    </source>
</reference>
<feature type="signal peptide" evidence="2">
    <location>
        <begin position="1"/>
        <end position="14"/>
    </location>
</feature>
<feature type="chain" id="PRO_0000393529" description="Probable glucan 1,3-beta-glucosidase A">
    <location>
        <begin position="15"/>
        <end position="405"/>
    </location>
</feature>
<feature type="active site" description="Proton donor" evidence="1">
    <location>
        <position position="199"/>
    </location>
</feature>
<feature type="active site" description="Nucleophile" evidence="1">
    <location>
        <position position="298"/>
    </location>
</feature>
<feature type="disulfide bond" evidence="1">
    <location>
        <begin position="280"/>
        <end position="405"/>
    </location>
</feature>
<feature type="disulfide bond" evidence="1">
    <location>
        <begin position="306"/>
        <end position="332"/>
    </location>
</feature>
<protein>
    <recommendedName>
        <fullName>Probable glucan 1,3-beta-glucosidase A</fullName>
        <ecNumber>3.2.1.58</ecNumber>
    </recommendedName>
    <alternativeName>
        <fullName>Exo-1,3-beta-glucanase 1</fullName>
    </alternativeName>
    <alternativeName>
        <fullName>Exo-1,3-beta-glucanase A</fullName>
    </alternativeName>
</protein>
<comment type="function">
    <text evidence="1">Beta-glucanases participate in the metabolism of beta-glucan, the main structural component of the cell wall. It could also function biosynthetically as a transglycosylase (By similarity).</text>
</comment>
<comment type="catalytic activity">
    <reaction>
        <text>Successive hydrolysis of beta-D-glucose units from the non-reducing ends of (1-&gt;3)-beta-D-glucans, releasing alpha-glucose.</text>
        <dbReference type="EC" id="3.2.1.58"/>
    </reaction>
</comment>
<comment type="cofactor">
    <cofactor evidence="1">
        <name>Mn(2+)</name>
        <dbReference type="ChEBI" id="CHEBI:29035"/>
    </cofactor>
</comment>
<comment type="subunit">
    <text evidence="1">Monomer.</text>
</comment>
<comment type="subcellular location">
    <subcellularLocation>
        <location evidence="1">Secreted</location>
    </subcellularLocation>
</comment>
<comment type="similarity">
    <text evidence="3">Belongs to the glycosyl hydrolase 5 (cellulase A) family.</text>
</comment>
<gene>
    <name type="primary">exgA</name>
    <name type="synonym">exg1</name>
    <name type="ORF">AFLA_028260</name>
</gene>
<keyword id="KW-0119">Carbohydrate metabolism</keyword>
<keyword id="KW-0961">Cell wall biogenesis/degradation</keyword>
<keyword id="KW-1015">Disulfide bond</keyword>
<keyword id="KW-0326">Glycosidase</keyword>
<keyword id="KW-0378">Hydrolase</keyword>
<keyword id="KW-0464">Manganese</keyword>
<keyword id="KW-0479">Metal-binding</keyword>
<keyword id="KW-0624">Polysaccharide degradation</keyword>
<keyword id="KW-0964">Secreted</keyword>
<keyword id="KW-0732">Signal</keyword>
<evidence type="ECO:0000250" key="1"/>
<evidence type="ECO:0000255" key="2"/>
<evidence type="ECO:0000305" key="3"/>
<organism>
    <name type="scientific">Aspergillus flavus (strain ATCC 200026 / FGSC A1120 / IAM 13836 / NRRL 3357 / JCM 12722 / SRRC 167)</name>
    <dbReference type="NCBI Taxonomy" id="332952"/>
    <lineage>
        <taxon>Eukaryota</taxon>
        <taxon>Fungi</taxon>
        <taxon>Dikarya</taxon>
        <taxon>Ascomycota</taxon>
        <taxon>Pezizomycotina</taxon>
        <taxon>Eurotiomycetes</taxon>
        <taxon>Eurotiomycetidae</taxon>
        <taxon>Eurotiales</taxon>
        <taxon>Aspergillaceae</taxon>
        <taxon>Aspergillus</taxon>
        <taxon>Aspergillus subgen. Circumdati</taxon>
    </lineage>
</organism>
<accession>B8N151</accession>
<dbReference type="EC" id="3.2.1.58"/>
<dbReference type="EMBL" id="EQ963473">
    <property type="protein sequence ID" value="EED55554.1"/>
    <property type="molecule type" value="Genomic_DNA"/>
</dbReference>
<dbReference type="RefSeq" id="XP_002374336.1">
    <property type="nucleotide sequence ID" value="XM_002374295.1"/>
</dbReference>
<dbReference type="SMR" id="B8N151"/>
<dbReference type="STRING" id="332952.B8N151"/>
<dbReference type="EnsemblFungi" id="EED55554">
    <property type="protein sequence ID" value="EED55554"/>
    <property type="gene ID" value="AFLA_028260"/>
</dbReference>
<dbReference type="VEuPathDB" id="FungiDB:AFLA_000677"/>
<dbReference type="eggNOG" id="ENOG502QPYU">
    <property type="taxonomic scope" value="Eukaryota"/>
</dbReference>
<dbReference type="HOGENOM" id="CLU_004624_0_1_1"/>
<dbReference type="OMA" id="GYPGWFN"/>
<dbReference type="GO" id="GO:0009986">
    <property type="term" value="C:cell surface"/>
    <property type="evidence" value="ECO:0007669"/>
    <property type="project" value="TreeGrafter"/>
</dbReference>
<dbReference type="GO" id="GO:0005576">
    <property type="term" value="C:extracellular region"/>
    <property type="evidence" value="ECO:0007669"/>
    <property type="project" value="UniProtKB-SubCell"/>
</dbReference>
<dbReference type="GO" id="GO:0004338">
    <property type="term" value="F:glucan exo-1,3-beta-glucosidase activity"/>
    <property type="evidence" value="ECO:0007669"/>
    <property type="project" value="UniProtKB-EC"/>
</dbReference>
<dbReference type="GO" id="GO:0046872">
    <property type="term" value="F:metal ion binding"/>
    <property type="evidence" value="ECO:0007669"/>
    <property type="project" value="UniProtKB-KW"/>
</dbReference>
<dbReference type="GO" id="GO:0071555">
    <property type="term" value="P:cell wall organization"/>
    <property type="evidence" value="ECO:0007669"/>
    <property type="project" value="UniProtKB-KW"/>
</dbReference>
<dbReference type="GO" id="GO:0009251">
    <property type="term" value="P:glucan catabolic process"/>
    <property type="evidence" value="ECO:0007669"/>
    <property type="project" value="TreeGrafter"/>
</dbReference>
<dbReference type="FunFam" id="3.20.20.80:FF:000033">
    <property type="entry name" value="Glucan 1,3-beta-glucosidase A"/>
    <property type="match status" value="1"/>
</dbReference>
<dbReference type="Gene3D" id="3.20.20.80">
    <property type="entry name" value="Glycosidases"/>
    <property type="match status" value="1"/>
</dbReference>
<dbReference type="InterPro" id="IPR001547">
    <property type="entry name" value="Glyco_hydro_5"/>
</dbReference>
<dbReference type="InterPro" id="IPR017853">
    <property type="entry name" value="Glycoside_hydrolase_SF"/>
</dbReference>
<dbReference type="InterPro" id="IPR050386">
    <property type="entry name" value="Glycosyl_hydrolase_5"/>
</dbReference>
<dbReference type="PANTHER" id="PTHR31297:SF1">
    <property type="entry name" value="GLUCAN 1,3-BETA-GLUCOSIDASE I_II-RELATED"/>
    <property type="match status" value="1"/>
</dbReference>
<dbReference type="PANTHER" id="PTHR31297">
    <property type="entry name" value="GLUCAN ENDO-1,6-BETA-GLUCOSIDASE B"/>
    <property type="match status" value="1"/>
</dbReference>
<dbReference type="Pfam" id="PF00150">
    <property type="entry name" value="Cellulase"/>
    <property type="match status" value="1"/>
</dbReference>
<dbReference type="SUPFAM" id="SSF51445">
    <property type="entry name" value="(Trans)glycosidases"/>
    <property type="match status" value="1"/>
</dbReference>